<gene>
    <name evidence="1" type="primary">tsaD</name>
    <name type="synonym">gcp</name>
    <name type="ordered locus">DSY3974</name>
</gene>
<feature type="chain" id="PRO_0000303346" description="tRNA N6-adenosine threonylcarbamoyltransferase">
    <location>
        <begin position="1"/>
        <end position="341"/>
    </location>
</feature>
<feature type="binding site" evidence="1">
    <location>
        <position position="118"/>
    </location>
    <ligand>
        <name>Fe cation</name>
        <dbReference type="ChEBI" id="CHEBI:24875"/>
    </ligand>
</feature>
<feature type="binding site" evidence="1">
    <location>
        <position position="122"/>
    </location>
    <ligand>
        <name>Fe cation</name>
        <dbReference type="ChEBI" id="CHEBI:24875"/>
    </ligand>
</feature>
<feature type="binding site" evidence="1">
    <location>
        <begin position="141"/>
        <end position="145"/>
    </location>
    <ligand>
        <name>substrate</name>
    </ligand>
</feature>
<feature type="binding site" evidence="1">
    <location>
        <position position="174"/>
    </location>
    <ligand>
        <name>substrate</name>
    </ligand>
</feature>
<feature type="binding site" evidence="1">
    <location>
        <position position="187"/>
    </location>
    <ligand>
        <name>substrate</name>
    </ligand>
</feature>
<feature type="binding site" evidence="1">
    <location>
        <position position="281"/>
    </location>
    <ligand>
        <name>substrate</name>
    </ligand>
</feature>
<feature type="binding site" evidence="1">
    <location>
        <position position="309"/>
    </location>
    <ligand>
        <name>Fe cation</name>
        <dbReference type="ChEBI" id="CHEBI:24875"/>
    </ligand>
</feature>
<name>TSAD_DESHY</name>
<organism>
    <name type="scientific">Desulfitobacterium hafniense (strain Y51)</name>
    <dbReference type="NCBI Taxonomy" id="138119"/>
    <lineage>
        <taxon>Bacteria</taxon>
        <taxon>Bacillati</taxon>
        <taxon>Bacillota</taxon>
        <taxon>Clostridia</taxon>
        <taxon>Eubacteriales</taxon>
        <taxon>Desulfitobacteriaceae</taxon>
        <taxon>Desulfitobacterium</taxon>
    </lineage>
</organism>
<evidence type="ECO:0000255" key="1">
    <source>
        <dbReference type="HAMAP-Rule" id="MF_01445"/>
    </source>
</evidence>
<sequence length="341" mass="36110">MPVNNKDINILGIETSCDETSAAVLRNGCELLSHIISSQIKTHQKYGGVVPEVASREHILHLQSVVEQALQEAKMGFGDLAGIAVTYGPGLVGSLLVGVAGAKAMAYGAGIPLLGVNHLEGHIYANFLHNPGLKFPLLALLVSGGHSHLVYFEGHGKYQVLGQTRDDAAGEALDKVARTLGLGYPGGPYIQKAALEGNPHAYEFPRAMLEPGSLDFSFSGVKSAVLNTLNSARMKGETVNVADVAASFQEAIVDVLVRKTLLALARTKAPTLVLAGGVAANTLLRERLTEATQKRGIAFSYPPPILCTDNGAMIATAGYYRYLDKDYAPWNLNAIPGLNLA</sequence>
<protein>
    <recommendedName>
        <fullName evidence="1">tRNA N6-adenosine threonylcarbamoyltransferase</fullName>
        <ecNumber evidence="1">2.3.1.234</ecNumber>
    </recommendedName>
    <alternativeName>
        <fullName evidence="1">N6-L-threonylcarbamoyladenine synthase</fullName>
        <shortName evidence="1">t(6)A synthase</shortName>
    </alternativeName>
    <alternativeName>
        <fullName evidence="1">t(6)A37 threonylcarbamoyladenosine biosynthesis protein TsaD</fullName>
    </alternativeName>
    <alternativeName>
        <fullName evidence="1">tRNA threonylcarbamoyladenosine biosynthesis protein TsaD</fullName>
    </alternativeName>
</protein>
<comment type="function">
    <text evidence="1">Required for the formation of a threonylcarbamoyl group on adenosine at position 37 (t(6)A37) in tRNAs that read codons beginning with adenine. Is involved in the transfer of the threonylcarbamoyl moiety of threonylcarbamoyl-AMP (TC-AMP) to the N6 group of A37, together with TsaE and TsaB. TsaD likely plays a direct catalytic role in this reaction.</text>
</comment>
<comment type="catalytic activity">
    <reaction evidence="1">
        <text>L-threonylcarbamoyladenylate + adenosine(37) in tRNA = N(6)-L-threonylcarbamoyladenosine(37) in tRNA + AMP + H(+)</text>
        <dbReference type="Rhea" id="RHEA:37059"/>
        <dbReference type="Rhea" id="RHEA-COMP:10162"/>
        <dbReference type="Rhea" id="RHEA-COMP:10163"/>
        <dbReference type="ChEBI" id="CHEBI:15378"/>
        <dbReference type="ChEBI" id="CHEBI:73682"/>
        <dbReference type="ChEBI" id="CHEBI:74411"/>
        <dbReference type="ChEBI" id="CHEBI:74418"/>
        <dbReference type="ChEBI" id="CHEBI:456215"/>
        <dbReference type="EC" id="2.3.1.234"/>
    </reaction>
</comment>
<comment type="cofactor">
    <cofactor evidence="1">
        <name>Fe(2+)</name>
        <dbReference type="ChEBI" id="CHEBI:29033"/>
    </cofactor>
    <text evidence="1">Binds 1 Fe(2+) ion per subunit.</text>
</comment>
<comment type="subcellular location">
    <subcellularLocation>
        <location evidence="1">Cytoplasm</location>
    </subcellularLocation>
</comment>
<comment type="similarity">
    <text evidence="1">Belongs to the KAE1 / TsaD family.</text>
</comment>
<reference key="1">
    <citation type="journal article" date="2006" name="J. Bacteriol.">
        <title>Complete genome sequence of the dehalorespiring bacterium Desulfitobacterium hafniense Y51 and comparison with Dehalococcoides ethenogenes 195.</title>
        <authorList>
            <person name="Nonaka H."/>
            <person name="Keresztes G."/>
            <person name="Shinoda Y."/>
            <person name="Ikenaga Y."/>
            <person name="Abe M."/>
            <person name="Naito K."/>
            <person name="Inatomi K."/>
            <person name="Furukawa K."/>
            <person name="Inui M."/>
            <person name="Yukawa H."/>
        </authorList>
    </citation>
    <scope>NUCLEOTIDE SEQUENCE [LARGE SCALE GENOMIC DNA]</scope>
    <source>
        <strain>Y51</strain>
    </source>
</reference>
<dbReference type="EC" id="2.3.1.234" evidence="1"/>
<dbReference type="EMBL" id="AP008230">
    <property type="protein sequence ID" value="BAE85763.1"/>
    <property type="molecule type" value="Genomic_DNA"/>
</dbReference>
<dbReference type="SMR" id="Q24QC9"/>
<dbReference type="STRING" id="138119.DSY3974"/>
<dbReference type="KEGG" id="dsy:DSY3974"/>
<dbReference type="eggNOG" id="COG0533">
    <property type="taxonomic scope" value="Bacteria"/>
</dbReference>
<dbReference type="HOGENOM" id="CLU_023208_0_2_9"/>
<dbReference type="Proteomes" id="UP000001946">
    <property type="component" value="Chromosome"/>
</dbReference>
<dbReference type="GO" id="GO:0005737">
    <property type="term" value="C:cytoplasm"/>
    <property type="evidence" value="ECO:0007669"/>
    <property type="project" value="UniProtKB-SubCell"/>
</dbReference>
<dbReference type="GO" id="GO:0005506">
    <property type="term" value="F:iron ion binding"/>
    <property type="evidence" value="ECO:0007669"/>
    <property type="project" value="UniProtKB-UniRule"/>
</dbReference>
<dbReference type="GO" id="GO:0061711">
    <property type="term" value="F:N(6)-L-threonylcarbamoyladenine synthase activity"/>
    <property type="evidence" value="ECO:0007669"/>
    <property type="project" value="UniProtKB-EC"/>
</dbReference>
<dbReference type="GO" id="GO:0002949">
    <property type="term" value="P:tRNA threonylcarbamoyladenosine modification"/>
    <property type="evidence" value="ECO:0007669"/>
    <property type="project" value="UniProtKB-UniRule"/>
</dbReference>
<dbReference type="CDD" id="cd24133">
    <property type="entry name" value="ASKHA_NBD_TsaD_bac"/>
    <property type="match status" value="1"/>
</dbReference>
<dbReference type="FunFam" id="3.30.420.40:FF:000012">
    <property type="entry name" value="tRNA N6-adenosine threonylcarbamoyltransferase"/>
    <property type="match status" value="1"/>
</dbReference>
<dbReference type="FunFam" id="3.30.420.40:FF:000040">
    <property type="entry name" value="tRNA N6-adenosine threonylcarbamoyltransferase"/>
    <property type="match status" value="1"/>
</dbReference>
<dbReference type="Gene3D" id="3.30.420.40">
    <property type="match status" value="2"/>
</dbReference>
<dbReference type="HAMAP" id="MF_01445">
    <property type="entry name" value="TsaD"/>
    <property type="match status" value="1"/>
</dbReference>
<dbReference type="InterPro" id="IPR043129">
    <property type="entry name" value="ATPase_NBD"/>
</dbReference>
<dbReference type="InterPro" id="IPR000905">
    <property type="entry name" value="Gcp-like_dom"/>
</dbReference>
<dbReference type="InterPro" id="IPR017861">
    <property type="entry name" value="KAE1/TsaD"/>
</dbReference>
<dbReference type="InterPro" id="IPR022450">
    <property type="entry name" value="TsaD"/>
</dbReference>
<dbReference type="NCBIfam" id="TIGR00329">
    <property type="entry name" value="gcp_kae1"/>
    <property type="match status" value="1"/>
</dbReference>
<dbReference type="NCBIfam" id="TIGR03723">
    <property type="entry name" value="T6A_TsaD_YgjD"/>
    <property type="match status" value="1"/>
</dbReference>
<dbReference type="PANTHER" id="PTHR11735">
    <property type="entry name" value="TRNA N6-ADENOSINE THREONYLCARBAMOYLTRANSFERASE"/>
    <property type="match status" value="1"/>
</dbReference>
<dbReference type="PANTHER" id="PTHR11735:SF6">
    <property type="entry name" value="TRNA N6-ADENOSINE THREONYLCARBAMOYLTRANSFERASE, MITOCHONDRIAL"/>
    <property type="match status" value="1"/>
</dbReference>
<dbReference type="Pfam" id="PF00814">
    <property type="entry name" value="TsaD"/>
    <property type="match status" value="1"/>
</dbReference>
<dbReference type="PRINTS" id="PR00789">
    <property type="entry name" value="OSIALOPTASE"/>
</dbReference>
<dbReference type="SUPFAM" id="SSF53067">
    <property type="entry name" value="Actin-like ATPase domain"/>
    <property type="match status" value="1"/>
</dbReference>
<accession>Q24QC9</accession>
<keyword id="KW-0012">Acyltransferase</keyword>
<keyword id="KW-0963">Cytoplasm</keyword>
<keyword id="KW-0408">Iron</keyword>
<keyword id="KW-0479">Metal-binding</keyword>
<keyword id="KW-1185">Reference proteome</keyword>
<keyword id="KW-0808">Transferase</keyword>
<keyword id="KW-0819">tRNA processing</keyword>
<proteinExistence type="inferred from homology"/>